<protein>
    <recommendedName>
        <fullName evidence="1">L-rhamnose mutarotase</fullName>
        <ecNumber evidence="1">5.1.3.32</ecNumber>
    </recommendedName>
    <alternativeName>
        <fullName evidence="1">Rhamnose 1-epimerase</fullName>
    </alternativeName>
    <alternativeName>
        <fullName evidence="1">Type-3 mutarotase</fullName>
    </alternativeName>
</protein>
<reference key="1">
    <citation type="submission" date="2007-11" db="EMBL/GenBank/DDBJ databases">
        <authorList>
            <consortium name="The Salmonella enterica serovar Arizonae Genome Sequencing Project"/>
            <person name="McClelland M."/>
            <person name="Sanderson E.K."/>
            <person name="Porwollik S."/>
            <person name="Spieth J."/>
            <person name="Clifton W.S."/>
            <person name="Fulton R."/>
            <person name="Chunyan W."/>
            <person name="Wollam A."/>
            <person name="Shah N."/>
            <person name="Pepin K."/>
            <person name="Bhonagiri V."/>
            <person name="Nash W."/>
            <person name="Johnson M."/>
            <person name="Thiruvilangam P."/>
            <person name="Wilson R."/>
        </authorList>
    </citation>
    <scope>NUCLEOTIDE SEQUENCE [LARGE SCALE GENOMIC DNA]</scope>
    <source>
        <strain>ATCC BAA-731 / CDC346-86 / RSK2980</strain>
    </source>
</reference>
<gene>
    <name evidence="1" type="primary">rhaM</name>
    <name type="ordered locus">SARI_03604</name>
</gene>
<name>RHAM_SALAR</name>
<dbReference type="EC" id="5.1.3.32" evidence="1"/>
<dbReference type="EMBL" id="CP000880">
    <property type="protein sequence ID" value="ABX23416.1"/>
    <property type="molecule type" value="Genomic_DNA"/>
</dbReference>
<dbReference type="SMR" id="A9MI70"/>
<dbReference type="STRING" id="41514.SARI_03604"/>
<dbReference type="KEGG" id="ses:SARI_03604"/>
<dbReference type="HOGENOM" id="CLU_100689_2_0_6"/>
<dbReference type="UniPathway" id="UPA00125"/>
<dbReference type="Proteomes" id="UP000002084">
    <property type="component" value="Chromosome"/>
</dbReference>
<dbReference type="GO" id="GO:0005737">
    <property type="term" value="C:cytoplasm"/>
    <property type="evidence" value="ECO:0007669"/>
    <property type="project" value="UniProtKB-SubCell"/>
</dbReference>
<dbReference type="GO" id="GO:0062192">
    <property type="term" value="F:L-rhamnose mutarotase activity"/>
    <property type="evidence" value="ECO:0007669"/>
    <property type="project" value="UniProtKB-EC"/>
</dbReference>
<dbReference type="GO" id="GO:0019301">
    <property type="term" value="P:rhamnose catabolic process"/>
    <property type="evidence" value="ECO:0007669"/>
    <property type="project" value="TreeGrafter"/>
</dbReference>
<dbReference type="Gene3D" id="3.30.70.100">
    <property type="match status" value="1"/>
</dbReference>
<dbReference type="HAMAP" id="MF_01663">
    <property type="entry name" value="L_rham_rotase"/>
    <property type="match status" value="1"/>
</dbReference>
<dbReference type="InterPro" id="IPR011008">
    <property type="entry name" value="Dimeric_a/b-barrel"/>
</dbReference>
<dbReference type="InterPro" id="IPR013448">
    <property type="entry name" value="L-rhamnose_mutarotase"/>
</dbReference>
<dbReference type="InterPro" id="IPR008000">
    <property type="entry name" value="Rham/fucose_mutarotase"/>
</dbReference>
<dbReference type="NCBIfam" id="TIGR02625">
    <property type="entry name" value="YiiL_rotase"/>
    <property type="match status" value="1"/>
</dbReference>
<dbReference type="PANTHER" id="PTHR34389">
    <property type="entry name" value="L-RHAMNOSE MUTAROTASE"/>
    <property type="match status" value="1"/>
</dbReference>
<dbReference type="PANTHER" id="PTHR34389:SF2">
    <property type="entry name" value="L-RHAMNOSE MUTAROTASE"/>
    <property type="match status" value="1"/>
</dbReference>
<dbReference type="Pfam" id="PF05336">
    <property type="entry name" value="rhaM"/>
    <property type="match status" value="1"/>
</dbReference>
<dbReference type="SUPFAM" id="SSF54909">
    <property type="entry name" value="Dimeric alpha+beta barrel"/>
    <property type="match status" value="1"/>
</dbReference>
<evidence type="ECO:0000255" key="1">
    <source>
        <dbReference type="HAMAP-Rule" id="MF_01663"/>
    </source>
</evidence>
<sequence length="104" mass="12227">MIRKAFVMQVNADAHEEYQRRHNPIWPELEAVLKSHGAHHYAIYLDVERNLLFATVEIESEARWNAVASTDICQRWWKHMRDVMPANPDNSPVSAELKEVFWLA</sequence>
<feature type="chain" id="PRO_0000344598" description="L-rhamnose mutarotase">
    <location>
        <begin position="1"/>
        <end position="104"/>
    </location>
</feature>
<feature type="active site" description="Proton donor" evidence="1">
    <location>
        <position position="22"/>
    </location>
</feature>
<feature type="binding site" evidence="1">
    <location>
        <position position="18"/>
    </location>
    <ligand>
        <name>substrate</name>
    </ligand>
</feature>
<feature type="binding site" evidence="1">
    <location>
        <position position="41"/>
    </location>
    <ligand>
        <name>substrate</name>
    </ligand>
</feature>
<feature type="binding site" evidence="1">
    <location>
        <begin position="76"/>
        <end position="77"/>
    </location>
    <ligand>
        <name>substrate</name>
    </ligand>
</feature>
<keyword id="KW-0119">Carbohydrate metabolism</keyword>
<keyword id="KW-0963">Cytoplasm</keyword>
<keyword id="KW-0413">Isomerase</keyword>
<keyword id="KW-1185">Reference proteome</keyword>
<keyword id="KW-0684">Rhamnose metabolism</keyword>
<proteinExistence type="inferred from homology"/>
<comment type="function">
    <text evidence="1">Involved in the anomeric conversion of L-rhamnose.</text>
</comment>
<comment type="catalytic activity">
    <reaction evidence="1">
        <text>alpha-L-rhamnose = beta-L-rhamnose</text>
        <dbReference type="Rhea" id="RHEA:25584"/>
        <dbReference type="ChEBI" id="CHEBI:27586"/>
        <dbReference type="ChEBI" id="CHEBI:27907"/>
        <dbReference type="EC" id="5.1.3.32"/>
    </reaction>
</comment>
<comment type="pathway">
    <text evidence="1">Carbohydrate metabolism; L-rhamnose metabolism.</text>
</comment>
<comment type="subunit">
    <text evidence="1">Homodimer.</text>
</comment>
<comment type="subcellular location">
    <subcellularLocation>
        <location evidence="1">Cytoplasm</location>
    </subcellularLocation>
</comment>
<comment type="similarity">
    <text evidence="1">Belongs to the rhamnose mutarotase family.</text>
</comment>
<accession>A9MI70</accession>
<organism>
    <name type="scientific">Salmonella arizonae (strain ATCC BAA-731 / CDC346-86 / RSK2980)</name>
    <dbReference type="NCBI Taxonomy" id="41514"/>
    <lineage>
        <taxon>Bacteria</taxon>
        <taxon>Pseudomonadati</taxon>
        <taxon>Pseudomonadota</taxon>
        <taxon>Gammaproteobacteria</taxon>
        <taxon>Enterobacterales</taxon>
        <taxon>Enterobacteriaceae</taxon>
        <taxon>Salmonella</taxon>
    </lineage>
</organism>